<name>RS16_RHOOB</name>
<reference key="1">
    <citation type="submission" date="2009-03" db="EMBL/GenBank/DDBJ databases">
        <title>Comparison of the complete genome sequences of Rhodococcus erythropolis PR4 and Rhodococcus opacus B4.</title>
        <authorList>
            <person name="Takarada H."/>
            <person name="Sekine M."/>
            <person name="Hosoyama A."/>
            <person name="Yamada R."/>
            <person name="Fujisawa T."/>
            <person name="Omata S."/>
            <person name="Shimizu A."/>
            <person name="Tsukatani N."/>
            <person name="Tanikawa S."/>
            <person name="Fujita N."/>
            <person name="Harayama S."/>
        </authorList>
    </citation>
    <scope>NUCLEOTIDE SEQUENCE [LARGE SCALE GENOMIC DNA]</scope>
    <source>
        <strain>B4</strain>
    </source>
</reference>
<protein>
    <recommendedName>
        <fullName evidence="1">Small ribosomal subunit protein bS16</fullName>
    </recommendedName>
    <alternativeName>
        <fullName evidence="3">30S ribosomal protein S16</fullName>
    </alternativeName>
</protein>
<proteinExistence type="inferred from homology"/>
<gene>
    <name evidence="1" type="primary">rpsP</name>
    <name type="ordered locus">ROP_65870</name>
</gene>
<comment type="similarity">
    <text evidence="1">Belongs to the bacterial ribosomal protein bS16 family.</text>
</comment>
<accession>C1B2R7</accession>
<feature type="chain" id="PRO_1000134320" description="Small ribosomal subunit protein bS16">
    <location>
        <begin position="1"/>
        <end position="153"/>
    </location>
</feature>
<feature type="region of interest" description="Disordered" evidence="2">
    <location>
        <begin position="114"/>
        <end position="153"/>
    </location>
</feature>
<feature type="compositionally biased region" description="Low complexity" evidence="2">
    <location>
        <begin position="137"/>
        <end position="153"/>
    </location>
</feature>
<dbReference type="EMBL" id="AP011115">
    <property type="protein sequence ID" value="BAH54834.1"/>
    <property type="molecule type" value="Genomic_DNA"/>
</dbReference>
<dbReference type="RefSeq" id="WP_015890277.1">
    <property type="nucleotide sequence ID" value="NC_012522.1"/>
</dbReference>
<dbReference type="SMR" id="C1B2R7"/>
<dbReference type="STRING" id="632772.ROP_65870"/>
<dbReference type="KEGG" id="rop:ROP_65870"/>
<dbReference type="PATRIC" id="fig|632772.20.peg.6873"/>
<dbReference type="HOGENOM" id="CLU_100590_1_1_11"/>
<dbReference type="OrthoDB" id="9807878at2"/>
<dbReference type="Proteomes" id="UP000002212">
    <property type="component" value="Chromosome"/>
</dbReference>
<dbReference type="GO" id="GO:0005737">
    <property type="term" value="C:cytoplasm"/>
    <property type="evidence" value="ECO:0007669"/>
    <property type="project" value="UniProtKB-ARBA"/>
</dbReference>
<dbReference type="GO" id="GO:0015935">
    <property type="term" value="C:small ribosomal subunit"/>
    <property type="evidence" value="ECO:0007669"/>
    <property type="project" value="TreeGrafter"/>
</dbReference>
<dbReference type="GO" id="GO:0003735">
    <property type="term" value="F:structural constituent of ribosome"/>
    <property type="evidence" value="ECO:0007669"/>
    <property type="project" value="InterPro"/>
</dbReference>
<dbReference type="GO" id="GO:0006412">
    <property type="term" value="P:translation"/>
    <property type="evidence" value="ECO:0007669"/>
    <property type="project" value="UniProtKB-UniRule"/>
</dbReference>
<dbReference type="Gene3D" id="3.30.1320.10">
    <property type="match status" value="1"/>
</dbReference>
<dbReference type="HAMAP" id="MF_00385">
    <property type="entry name" value="Ribosomal_bS16"/>
    <property type="match status" value="1"/>
</dbReference>
<dbReference type="InterPro" id="IPR000307">
    <property type="entry name" value="Ribosomal_bS16"/>
</dbReference>
<dbReference type="InterPro" id="IPR020592">
    <property type="entry name" value="Ribosomal_bS16_CS"/>
</dbReference>
<dbReference type="InterPro" id="IPR023803">
    <property type="entry name" value="Ribosomal_bS16_dom_sf"/>
</dbReference>
<dbReference type="NCBIfam" id="NF011093">
    <property type="entry name" value="PRK14520.1"/>
    <property type="match status" value="1"/>
</dbReference>
<dbReference type="NCBIfam" id="TIGR00002">
    <property type="entry name" value="S16"/>
    <property type="match status" value="1"/>
</dbReference>
<dbReference type="PANTHER" id="PTHR12919">
    <property type="entry name" value="30S RIBOSOMAL PROTEIN S16"/>
    <property type="match status" value="1"/>
</dbReference>
<dbReference type="PANTHER" id="PTHR12919:SF20">
    <property type="entry name" value="SMALL RIBOSOMAL SUBUNIT PROTEIN BS16M"/>
    <property type="match status" value="1"/>
</dbReference>
<dbReference type="Pfam" id="PF00886">
    <property type="entry name" value="Ribosomal_S16"/>
    <property type="match status" value="1"/>
</dbReference>
<dbReference type="SUPFAM" id="SSF54565">
    <property type="entry name" value="Ribosomal protein S16"/>
    <property type="match status" value="1"/>
</dbReference>
<dbReference type="PROSITE" id="PS00732">
    <property type="entry name" value="RIBOSOMAL_S16"/>
    <property type="match status" value="1"/>
</dbReference>
<organism>
    <name type="scientific">Rhodococcus opacus (strain B4)</name>
    <dbReference type="NCBI Taxonomy" id="632772"/>
    <lineage>
        <taxon>Bacteria</taxon>
        <taxon>Bacillati</taxon>
        <taxon>Actinomycetota</taxon>
        <taxon>Actinomycetes</taxon>
        <taxon>Mycobacteriales</taxon>
        <taxon>Nocardiaceae</taxon>
        <taxon>Rhodococcus</taxon>
    </lineage>
</organism>
<keyword id="KW-0687">Ribonucleoprotein</keyword>
<keyword id="KW-0689">Ribosomal protein</keyword>
<sequence>MAVKIKLTRLGKIRNPQYRIVVADSRTRRNGRAIETIGKYHPKEEPSLIEVDSERAQYWLGVGAQPTEPVEAILKITGDWQKFKGLPGAEGTLRVKEAKPTKLELFQAALAQAENEPVGEAITPKKKKAKAEDAEAAADAPAEAAAESEAADK</sequence>
<evidence type="ECO:0000255" key="1">
    <source>
        <dbReference type="HAMAP-Rule" id="MF_00385"/>
    </source>
</evidence>
<evidence type="ECO:0000256" key="2">
    <source>
        <dbReference type="SAM" id="MobiDB-lite"/>
    </source>
</evidence>
<evidence type="ECO:0000305" key="3"/>